<sequence>MYLVVGLGNIGKEYKQTRHNIGFDVVDIIAEKYNIEINRQKFKGSYGEGRIGNEKIILLKPSTYMNLSGESVIEAANFYKIDKENIIVIYDDMSIDIGKLRVRGKGSAGGHNGIKNIIQHLNSDIFPRVRVGIGQPDENVVNYVLGKFSKDQREIIEKVLAMSAKACISIVEDGVTEAMNKYNGVKIEV</sequence>
<organism>
    <name type="scientific">Clostridium botulinum (strain 657 / Type Ba4)</name>
    <dbReference type="NCBI Taxonomy" id="515621"/>
    <lineage>
        <taxon>Bacteria</taxon>
        <taxon>Bacillati</taxon>
        <taxon>Bacillota</taxon>
        <taxon>Clostridia</taxon>
        <taxon>Eubacteriales</taxon>
        <taxon>Clostridiaceae</taxon>
        <taxon>Clostridium</taxon>
    </lineage>
</organism>
<evidence type="ECO:0000255" key="1">
    <source>
        <dbReference type="HAMAP-Rule" id="MF_00083"/>
    </source>
</evidence>
<reference key="1">
    <citation type="submission" date="2008-05" db="EMBL/GenBank/DDBJ databases">
        <title>Genome sequence of Clostridium botulinum Ba4 strain 657.</title>
        <authorList>
            <person name="Shrivastava S."/>
            <person name="Brown J.L."/>
            <person name="Bruce D."/>
            <person name="Detter C."/>
            <person name="Munk C."/>
            <person name="Smith L.A."/>
            <person name="Smith T.J."/>
            <person name="Sutton G."/>
            <person name="Brettin T.S."/>
        </authorList>
    </citation>
    <scope>NUCLEOTIDE SEQUENCE [LARGE SCALE GENOMIC DNA]</scope>
    <source>
        <strain>657 / Type Ba4</strain>
    </source>
</reference>
<gene>
    <name evidence="1" type="primary">pth</name>
    <name type="ordered locus">CLJ_B3870</name>
</gene>
<accession>C3KW96</accession>
<name>PTH_CLOB6</name>
<keyword id="KW-0963">Cytoplasm</keyword>
<keyword id="KW-0378">Hydrolase</keyword>
<keyword id="KW-0694">RNA-binding</keyword>
<keyword id="KW-0820">tRNA-binding</keyword>
<protein>
    <recommendedName>
        <fullName evidence="1">Peptidyl-tRNA hydrolase</fullName>
        <shortName evidence="1">Pth</shortName>
        <ecNumber evidence="1">3.1.1.29</ecNumber>
    </recommendedName>
</protein>
<feature type="chain" id="PRO_1000202576" description="Peptidyl-tRNA hydrolase">
    <location>
        <begin position="1"/>
        <end position="189"/>
    </location>
</feature>
<feature type="active site" description="Proton acceptor" evidence="1">
    <location>
        <position position="19"/>
    </location>
</feature>
<feature type="binding site" evidence="1">
    <location>
        <position position="14"/>
    </location>
    <ligand>
        <name>tRNA</name>
        <dbReference type="ChEBI" id="CHEBI:17843"/>
    </ligand>
</feature>
<feature type="binding site" evidence="1">
    <location>
        <position position="64"/>
    </location>
    <ligand>
        <name>tRNA</name>
        <dbReference type="ChEBI" id="CHEBI:17843"/>
    </ligand>
</feature>
<feature type="binding site" evidence="1">
    <location>
        <position position="66"/>
    </location>
    <ligand>
        <name>tRNA</name>
        <dbReference type="ChEBI" id="CHEBI:17843"/>
    </ligand>
</feature>
<feature type="binding site" evidence="1">
    <location>
        <position position="112"/>
    </location>
    <ligand>
        <name>tRNA</name>
        <dbReference type="ChEBI" id="CHEBI:17843"/>
    </ligand>
</feature>
<feature type="site" description="Discriminates between blocked and unblocked aminoacyl-tRNA" evidence="1">
    <location>
        <position position="9"/>
    </location>
</feature>
<feature type="site" description="Stabilizes the basic form of H active site to accept a proton" evidence="1">
    <location>
        <position position="91"/>
    </location>
</feature>
<proteinExistence type="inferred from homology"/>
<comment type="function">
    <text evidence="1">Hydrolyzes ribosome-free peptidyl-tRNAs (with 1 or more amino acids incorporated), which drop off the ribosome during protein synthesis, or as a result of ribosome stalling.</text>
</comment>
<comment type="function">
    <text evidence="1">Catalyzes the release of premature peptidyl moieties from peptidyl-tRNA molecules trapped in stalled 50S ribosomal subunits, and thus maintains levels of free tRNAs and 50S ribosomes.</text>
</comment>
<comment type="catalytic activity">
    <reaction evidence="1">
        <text>an N-acyl-L-alpha-aminoacyl-tRNA + H2O = an N-acyl-L-amino acid + a tRNA + H(+)</text>
        <dbReference type="Rhea" id="RHEA:54448"/>
        <dbReference type="Rhea" id="RHEA-COMP:10123"/>
        <dbReference type="Rhea" id="RHEA-COMP:13883"/>
        <dbReference type="ChEBI" id="CHEBI:15377"/>
        <dbReference type="ChEBI" id="CHEBI:15378"/>
        <dbReference type="ChEBI" id="CHEBI:59874"/>
        <dbReference type="ChEBI" id="CHEBI:78442"/>
        <dbReference type="ChEBI" id="CHEBI:138191"/>
        <dbReference type="EC" id="3.1.1.29"/>
    </reaction>
</comment>
<comment type="subunit">
    <text evidence="1">Monomer.</text>
</comment>
<comment type="subcellular location">
    <subcellularLocation>
        <location evidence="1">Cytoplasm</location>
    </subcellularLocation>
</comment>
<comment type="similarity">
    <text evidence="1">Belongs to the PTH family.</text>
</comment>
<dbReference type="EC" id="3.1.1.29" evidence="1"/>
<dbReference type="EMBL" id="CP001083">
    <property type="protein sequence ID" value="ACQ53549.1"/>
    <property type="molecule type" value="Genomic_DNA"/>
</dbReference>
<dbReference type="RefSeq" id="WP_003361728.1">
    <property type="nucleotide sequence ID" value="NC_012658.1"/>
</dbReference>
<dbReference type="SMR" id="C3KW96"/>
<dbReference type="KEGG" id="cbi:CLJ_B3870"/>
<dbReference type="HOGENOM" id="CLU_062456_4_1_9"/>
<dbReference type="Proteomes" id="UP000002333">
    <property type="component" value="Chromosome"/>
</dbReference>
<dbReference type="GO" id="GO:0005737">
    <property type="term" value="C:cytoplasm"/>
    <property type="evidence" value="ECO:0007669"/>
    <property type="project" value="UniProtKB-SubCell"/>
</dbReference>
<dbReference type="GO" id="GO:0004045">
    <property type="term" value="F:peptidyl-tRNA hydrolase activity"/>
    <property type="evidence" value="ECO:0007669"/>
    <property type="project" value="UniProtKB-UniRule"/>
</dbReference>
<dbReference type="GO" id="GO:0000049">
    <property type="term" value="F:tRNA binding"/>
    <property type="evidence" value="ECO:0007669"/>
    <property type="project" value="UniProtKB-UniRule"/>
</dbReference>
<dbReference type="GO" id="GO:0006515">
    <property type="term" value="P:protein quality control for misfolded or incompletely synthesized proteins"/>
    <property type="evidence" value="ECO:0007669"/>
    <property type="project" value="UniProtKB-UniRule"/>
</dbReference>
<dbReference type="GO" id="GO:0072344">
    <property type="term" value="P:rescue of stalled ribosome"/>
    <property type="evidence" value="ECO:0007669"/>
    <property type="project" value="UniProtKB-UniRule"/>
</dbReference>
<dbReference type="CDD" id="cd00462">
    <property type="entry name" value="PTH"/>
    <property type="match status" value="1"/>
</dbReference>
<dbReference type="FunFam" id="3.40.50.1470:FF:000001">
    <property type="entry name" value="Peptidyl-tRNA hydrolase"/>
    <property type="match status" value="1"/>
</dbReference>
<dbReference type="Gene3D" id="3.40.50.1470">
    <property type="entry name" value="Peptidyl-tRNA hydrolase"/>
    <property type="match status" value="1"/>
</dbReference>
<dbReference type="HAMAP" id="MF_00083">
    <property type="entry name" value="Pept_tRNA_hydro_bact"/>
    <property type="match status" value="1"/>
</dbReference>
<dbReference type="InterPro" id="IPR001328">
    <property type="entry name" value="Pept_tRNA_hydro"/>
</dbReference>
<dbReference type="InterPro" id="IPR018171">
    <property type="entry name" value="Pept_tRNA_hydro_CS"/>
</dbReference>
<dbReference type="InterPro" id="IPR036416">
    <property type="entry name" value="Pept_tRNA_hydro_sf"/>
</dbReference>
<dbReference type="NCBIfam" id="TIGR00447">
    <property type="entry name" value="pth"/>
    <property type="match status" value="1"/>
</dbReference>
<dbReference type="PANTHER" id="PTHR17224">
    <property type="entry name" value="PEPTIDYL-TRNA HYDROLASE"/>
    <property type="match status" value="1"/>
</dbReference>
<dbReference type="PANTHER" id="PTHR17224:SF1">
    <property type="entry name" value="PEPTIDYL-TRNA HYDROLASE"/>
    <property type="match status" value="1"/>
</dbReference>
<dbReference type="Pfam" id="PF01195">
    <property type="entry name" value="Pept_tRNA_hydro"/>
    <property type="match status" value="1"/>
</dbReference>
<dbReference type="SUPFAM" id="SSF53178">
    <property type="entry name" value="Peptidyl-tRNA hydrolase-like"/>
    <property type="match status" value="1"/>
</dbReference>
<dbReference type="PROSITE" id="PS01195">
    <property type="entry name" value="PEPT_TRNA_HYDROL_1"/>
    <property type="match status" value="1"/>
</dbReference>
<dbReference type="PROSITE" id="PS01196">
    <property type="entry name" value="PEPT_TRNA_HYDROL_2"/>
    <property type="match status" value="1"/>
</dbReference>